<protein>
    <recommendedName>
        <fullName evidence="1">4-hydroxy-tetrahydrodipicolinate synthase</fullName>
        <shortName evidence="1">HTPA synthase</shortName>
        <ecNumber evidence="1">4.3.3.7</ecNumber>
    </recommendedName>
</protein>
<keyword id="KW-0028">Amino-acid biosynthesis</keyword>
<keyword id="KW-0963">Cytoplasm</keyword>
<keyword id="KW-0220">Diaminopimelate biosynthesis</keyword>
<keyword id="KW-0456">Lyase</keyword>
<keyword id="KW-0457">Lysine biosynthesis</keyword>
<keyword id="KW-1185">Reference proteome</keyword>
<keyword id="KW-0704">Schiff base</keyword>
<evidence type="ECO:0000255" key="1">
    <source>
        <dbReference type="HAMAP-Rule" id="MF_00418"/>
    </source>
</evidence>
<evidence type="ECO:0000305" key="2"/>
<reference key="1">
    <citation type="journal article" date="2008" name="J. Bacteriol.">
        <title>The genome of Heliobacterium modesticaldum, a phototrophic representative of the Firmicutes containing the simplest photosynthetic apparatus.</title>
        <authorList>
            <person name="Sattley W.M."/>
            <person name="Madigan M.T."/>
            <person name="Swingley W.D."/>
            <person name="Cheung P.C."/>
            <person name="Clocksin K.M."/>
            <person name="Conrad A.L."/>
            <person name="Dejesa L.C."/>
            <person name="Honchak B.M."/>
            <person name="Jung D.O."/>
            <person name="Karbach L.E."/>
            <person name="Kurdoglu A."/>
            <person name="Lahiri S."/>
            <person name="Mastrian S.D."/>
            <person name="Page L.E."/>
            <person name="Taylor H.L."/>
            <person name="Wang Z.T."/>
            <person name="Raymond J."/>
            <person name="Chen M."/>
            <person name="Blankenship R.E."/>
            <person name="Touchman J.W."/>
        </authorList>
    </citation>
    <scope>NUCLEOTIDE SEQUENCE [LARGE SCALE GENOMIC DNA]</scope>
    <source>
        <strain>ATCC 51547 / Ice1</strain>
    </source>
</reference>
<proteinExistence type="inferred from homology"/>
<feature type="chain" id="PRO_1000124039" description="4-hydroxy-tetrahydrodipicolinate synthase">
    <location>
        <begin position="1"/>
        <end position="300"/>
    </location>
</feature>
<feature type="active site" description="Proton donor/acceptor" evidence="1">
    <location>
        <position position="134"/>
    </location>
</feature>
<feature type="active site" description="Schiff-base intermediate with substrate" evidence="1">
    <location>
        <position position="162"/>
    </location>
</feature>
<feature type="binding site" evidence="1">
    <location>
        <position position="46"/>
    </location>
    <ligand>
        <name>pyruvate</name>
        <dbReference type="ChEBI" id="CHEBI:15361"/>
    </ligand>
</feature>
<feature type="binding site" evidence="1">
    <location>
        <position position="204"/>
    </location>
    <ligand>
        <name>pyruvate</name>
        <dbReference type="ChEBI" id="CHEBI:15361"/>
    </ligand>
</feature>
<feature type="site" description="Part of a proton relay during catalysis" evidence="1">
    <location>
        <position position="45"/>
    </location>
</feature>
<feature type="site" description="Part of a proton relay during catalysis" evidence="1">
    <location>
        <position position="108"/>
    </location>
</feature>
<name>DAPA_HELMI</name>
<gene>
    <name evidence="1" type="primary">dapA</name>
    <name type="ordered locus">Helmi_22400</name>
    <name type="ORF">HM1_2332</name>
</gene>
<accession>B0THT2</accession>
<sequence length="300" mass="31999">MEFGRLITAMVTPFNDRLEVDYVRAAELANHLVNTGSDGIVVAGTTGESPTLTKDEKIRLFSTVVDAVGDRASVIAGTGSYDTEATIELSRKAKEAGVDGLLLVGPYYNKPPQEGYYQHFAAVAKAVPLPIMLYNIPGRTGSNIIPATVARLMAFDNIVAIKEAAGSMDQVSEVVRLARPDFKVYSGDDSLTLPILSVGGHGIVSVASHLVGKEIQKMIAACINGNISEAARIHRELYPLFKGLFITSNPICVKAALNLLGRPVGGVRLPLVEANDQEVAAMRQLIESYGLDASCQETVA</sequence>
<organism>
    <name type="scientific">Heliobacterium modesticaldum (strain ATCC 51547 / Ice1)</name>
    <dbReference type="NCBI Taxonomy" id="498761"/>
    <lineage>
        <taxon>Bacteria</taxon>
        <taxon>Bacillati</taxon>
        <taxon>Bacillota</taxon>
        <taxon>Clostridia</taxon>
        <taxon>Eubacteriales</taxon>
        <taxon>Heliobacteriaceae</taxon>
        <taxon>Heliomicrobium</taxon>
    </lineage>
</organism>
<comment type="function">
    <text evidence="1">Catalyzes the condensation of (S)-aspartate-beta-semialdehyde [(S)-ASA] and pyruvate to 4-hydroxy-tetrahydrodipicolinate (HTPA).</text>
</comment>
<comment type="catalytic activity">
    <reaction evidence="1">
        <text>L-aspartate 4-semialdehyde + pyruvate = (2S,4S)-4-hydroxy-2,3,4,5-tetrahydrodipicolinate + H2O + H(+)</text>
        <dbReference type="Rhea" id="RHEA:34171"/>
        <dbReference type="ChEBI" id="CHEBI:15361"/>
        <dbReference type="ChEBI" id="CHEBI:15377"/>
        <dbReference type="ChEBI" id="CHEBI:15378"/>
        <dbReference type="ChEBI" id="CHEBI:67139"/>
        <dbReference type="ChEBI" id="CHEBI:537519"/>
        <dbReference type="EC" id="4.3.3.7"/>
    </reaction>
</comment>
<comment type="pathway">
    <text evidence="1">Amino-acid biosynthesis; L-lysine biosynthesis via DAP pathway; (S)-tetrahydrodipicolinate from L-aspartate: step 3/4.</text>
</comment>
<comment type="subunit">
    <text evidence="1">Homotetramer; dimer of dimers.</text>
</comment>
<comment type="subcellular location">
    <subcellularLocation>
        <location evidence="1">Cytoplasm</location>
    </subcellularLocation>
</comment>
<comment type="similarity">
    <text evidence="1">Belongs to the DapA family.</text>
</comment>
<comment type="caution">
    <text evidence="2">Was originally thought to be a dihydrodipicolinate synthase (DHDPS), catalyzing the condensation of (S)-aspartate-beta-semialdehyde [(S)-ASA] and pyruvate to dihydrodipicolinate (DHDP). However, it was shown in E.coli that the product of the enzymatic reaction is not dihydrodipicolinate but in fact (4S)-4-hydroxy-2,3,4,5-tetrahydro-(2S)-dipicolinic acid (HTPA), and that the consecutive dehydration reaction leading to DHDP is not spontaneous but catalyzed by DapB.</text>
</comment>
<dbReference type="EC" id="4.3.3.7" evidence="1"/>
<dbReference type="EMBL" id="CP000930">
    <property type="protein sequence ID" value="ABZ84865.1"/>
    <property type="molecule type" value="Genomic_DNA"/>
</dbReference>
<dbReference type="RefSeq" id="WP_012283363.1">
    <property type="nucleotide sequence ID" value="NC_010337.2"/>
</dbReference>
<dbReference type="SMR" id="B0THT2"/>
<dbReference type="STRING" id="498761.HM1_2332"/>
<dbReference type="KEGG" id="hmo:HM1_2332"/>
<dbReference type="eggNOG" id="COG0329">
    <property type="taxonomic scope" value="Bacteria"/>
</dbReference>
<dbReference type="HOGENOM" id="CLU_049343_7_1_9"/>
<dbReference type="OrthoDB" id="9782828at2"/>
<dbReference type="UniPathway" id="UPA00034">
    <property type="reaction ID" value="UER00017"/>
</dbReference>
<dbReference type="Proteomes" id="UP000008550">
    <property type="component" value="Chromosome"/>
</dbReference>
<dbReference type="GO" id="GO:0005829">
    <property type="term" value="C:cytosol"/>
    <property type="evidence" value="ECO:0007669"/>
    <property type="project" value="TreeGrafter"/>
</dbReference>
<dbReference type="GO" id="GO:0008840">
    <property type="term" value="F:4-hydroxy-tetrahydrodipicolinate synthase activity"/>
    <property type="evidence" value="ECO:0007669"/>
    <property type="project" value="UniProtKB-UniRule"/>
</dbReference>
<dbReference type="GO" id="GO:0019877">
    <property type="term" value="P:diaminopimelate biosynthetic process"/>
    <property type="evidence" value="ECO:0007669"/>
    <property type="project" value="UniProtKB-UniRule"/>
</dbReference>
<dbReference type="GO" id="GO:0009089">
    <property type="term" value="P:lysine biosynthetic process via diaminopimelate"/>
    <property type="evidence" value="ECO:0007669"/>
    <property type="project" value="UniProtKB-UniRule"/>
</dbReference>
<dbReference type="CDD" id="cd00950">
    <property type="entry name" value="DHDPS"/>
    <property type="match status" value="1"/>
</dbReference>
<dbReference type="Gene3D" id="3.20.20.70">
    <property type="entry name" value="Aldolase class I"/>
    <property type="match status" value="1"/>
</dbReference>
<dbReference type="HAMAP" id="MF_00418">
    <property type="entry name" value="DapA"/>
    <property type="match status" value="1"/>
</dbReference>
<dbReference type="InterPro" id="IPR013785">
    <property type="entry name" value="Aldolase_TIM"/>
</dbReference>
<dbReference type="InterPro" id="IPR005263">
    <property type="entry name" value="DapA"/>
</dbReference>
<dbReference type="InterPro" id="IPR002220">
    <property type="entry name" value="DapA-like"/>
</dbReference>
<dbReference type="InterPro" id="IPR020625">
    <property type="entry name" value="Schiff_base-form_aldolases_AS"/>
</dbReference>
<dbReference type="InterPro" id="IPR020624">
    <property type="entry name" value="Schiff_base-form_aldolases_CS"/>
</dbReference>
<dbReference type="NCBIfam" id="TIGR00674">
    <property type="entry name" value="dapA"/>
    <property type="match status" value="1"/>
</dbReference>
<dbReference type="PANTHER" id="PTHR12128:SF66">
    <property type="entry name" value="4-HYDROXY-2-OXOGLUTARATE ALDOLASE, MITOCHONDRIAL"/>
    <property type="match status" value="1"/>
</dbReference>
<dbReference type="PANTHER" id="PTHR12128">
    <property type="entry name" value="DIHYDRODIPICOLINATE SYNTHASE"/>
    <property type="match status" value="1"/>
</dbReference>
<dbReference type="Pfam" id="PF00701">
    <property type="entry name" value="DHDPS"/>
    <property type="match status" value="1"/>
</dbReference>
<dbReference type="PIRSF" id="PIRSF001365">
    <property type="entry name" value="DHDPS"/>
    <property type="match status" value="1"/>
</dbReference>
<dbReference type="PRINTS" id="PR00146">
    <property type="entry name" value="DHPICSNTHASE"/>
</dbReference>
<dbReference type="SMART" id="SM01130">
    <property type="entry name" value="DHDPS"/>
    <property type="match status" value="1"/>
</dbReference>
<dbReference type="SUPFAM" id="SSF51569">
    <property type="entry name" value="Aldolase"/>
    <property type="match status" value="1"/>
</dbReference>
<dbReference type="PROSITE" id="PS00665">
    <property type="entry name" value="DHDPS_1"/>
    <property type="match status" value="1"/>
</dbReference>
<dbReference type="PROSITE" id="PS00666">
    <property type="entry name" value="DHDPS_2"/>
    <property type="match status" value="1"/>
</dbReference>